<reference key="1">
    <citation type="journal article" date="2006" name="Mol. Microbiol.">
        <title>Role of pathogenicity island-associated integrases in the genome plasticity of uropathogenic Escherichia coli strain 536.</title>
        <authorList>
            <person name="Hochhut B."/>
            <person name="Wilde C."/>
            <person name="Balling G."/>
            <person name="Middendorf B."/>
            <person name="Dobrindt U."/>
            <person name="Brzuszkiewicz E."/>
            <person name="Gottschalk G."/>
            <person name="Carniel E."/>
            <person name="Hacker J."/>
        </authorList>
    </citation>
    <scope>NUCLEOTIDE SEQUENCE [LARGE SCALE GENOMIC DNA]</scope>
    <source>
        <strain>536 / UPEC</strain>
    </source>
</reference>
<protein>
    <recommendedName>
        <fullName evidence="1">Ribosomal RNA large subunit methyltransferase G</fullName>
        <ecNumber evidence="1">2.1.1.174</ecNumber>
    </recommendedName>
    <alternativeName>
        <fullName evidence="1">23S rRNA m2G1835 methyltransferase</fullName>
    </alternativeName>
    <alternativeName>
        <fullName evidence="1">rRNA (guanine-N(2)-)-methyltransferase RlmG</fullName>
    </alternativeName>
</protein>
<proteinExistence type="inferred from homology"/>
<name>RLMG_ECOL5</name>
<accession>Q0TD22</accession>
<gene>
    <name evidence="1" type="primary">rlmG</name>
    <name type="ordered locus">ECP_3175</name>
</gene>
<feature type="chain" id="PRO_0000366464" description="Ribosomal RNA large subunit methyltransferase G">
    <location>
        <begin position="1"/>
        <end position="378"/>
    </location>
</feature>
<comment type="function">
    <text evidence="1">Specifically methylates the guanine in position 1835 (m2G1835) of 23S rRNA.</text>
</comment>
<comment type="catalytic activity">
    <reaction evidence="1">
        <text>guanosine(1835) in 23S rRNA + S-adenosyl-L-methionine = N(2)-methylguanosine(1835) in 23S rRNA + S-adenosyl-L-homocysteine + H(+)</text>
        <dbReference type="Rhea" id="RHEA:42744"/>
        <dbReference type="Rhea" id="RHEA-COMP:10217"/>
        <dbReference type="Rhea" id="RHEA-COMP:10218"/>
        <dbReference type="ChEBI" id="CHEBI:15378"/>
        <dbReference type="ChEBI" id="CHEBI:57856"/>
        <dbReference type="ChEBI" id="CHEBI:59789"/>
        <dbReference type="ChEBI" id="CHEBI:74269"/>
        <dbReference type="ChEBI" id="CHEBI:74481"/>
        <dbReference type="EC" id="2.1.1.174"/>
    </reaction>
</comment>
<comment type="subcellular location">
    <subcellularLocation>
        <location evidence="1">Cytoplasm</location>
    </subcellularLocation>
</comment>
<comment type="similarity">
    <text evidence="1">Belongs to the methyltransferase superfamily. RlmG family.</text>
</comment>
<organism>
    <name type="scientific">Escherichia coli O6:K15:H31 (strain 536 / UPEC)</name>
    <dbReference type="NCBI Taxonomy" id="362663"/>
    <lineage>
        <taxon>Bacteria</taxon>
        <taxon>Pseudomonadati</taxon>
        <taxon>Pseudomonadota</taxon>
        <taxon>Gammaproteobacteria</taxon>
        <taxon>Enterobacterales</taxon>
        <taxon>Enterobacteriaceae</taxon>
        <taxon>Escherichia</taxon>
    </lineage>
</organism>
<evidence type="ECO:0000255" key="1">
    <source>
        <dbReference type="HAMAP-Rule" id="MF_01859"/>
    </source>
</evidence>
<keyword id="KW-0963">Cytoplasm</keyword>
<keyword id="KW-0489">Methyltransferase</keyword>
<keyword id="KW-0698">rRNA processing</keyword>
<keyword id="KW-0949">S-adenosyl-L-methionine</keyword>
<keyword id="KW-0808">Transferase</keyword>
<dbReference type="EC" id="2.1.1.174" evidence="1"/>
<dbReference type="EMBL" id="CP000247">
    <property type="protein sequence ID" value="ABG71157.1"/>
    <property type="molecule type" value="Genomic_DNA"/>
</dbReference>
<dbReference type="RefSeq" id="WP_000018673.1">
    <property type="nucleotide sequence ID" value="NC_008253.1"/>
</dbReference>
<dbReference type="SMR" id="Q0TD22"/>
<dbReference type="KEGG" id="ecp:ECP_3175"/>
<dbReference type="HOGENOM" id="CLU_040288_4_0_6"/>
<dbReference type="Proteomes" id="UP000009182">
    <property type="component" value="Chromosome"/>
</dbReference>
<dbReference type="GO" id="GO:0005737">
    <property type="term" value="C:cytoplasm"/>
    <property type="evidence" value="ECO:0007669"/>
    <property type="project" value="UniProtKB-SubCell"/>
</dbReference>
<dbReference type="GO" id="GO:0052916">
    <property type="term" value="F:23S rRNA (guanine(1835)-N(2))-methyltransferase activity"/>
    <property type="evidence" value="ECO:0007669"/>
    <property type="project" value="UniProtKB-EC"/>
</dbReference>
<dbReference type="GO" id="GO:0003676">
    <property type="term" value="F:nucleic acid binding"/>
    <property type="evidence" value="ECO:0007669"/>
    <property type="project" value="InterPro"/>
</dbReference>
<dbReference type="CDD" id="cd02440">
    <property type="entry name" value="AdoMet_MTases"/>
    <property type="match status" value="1"/>
</dbReference>
<dbReference type="FunFam" id="3.40.50.150:FF:000046">
    <property type="entry name" value="Ribosomal RNA large subunit methyltransferase G"/>
    <property type="match status" value="1"/>
</dbReference>
<dbReference type="FunFam" id="3.40.50.150:FF:000047">
    <property type="entry name" value="Ribosomal RNA large subunit methyltransferase G"/>
    <property type="match status" value="1"/>
</dbReference>
<dbReference type="Gene3D" id="3.40.50.150">
    <property type="entry name" value="Vaccinia Virus protein VP39"/>
    <property type="match status" value="2"/>
</dbReference>
<dbReference type="HAMAP" id="MF_01859">
    <property type="entry name" value="23SrRNA_methyltr_G"/>
    <property type="match status" value="1"/>
</dbReference>
<dbReference type="InterPro" id="IPR002052">
    <property type="entry name" value="DNA_methylase_N6_adenine_CS"/>
</dbReference>
<dbReference type="InterPro" id="IPR017237">
    <property type="entry name" value="rRNA_m2G-MeTrfase_RlmG"/>
</dbReference>
<dbReference type="InterPro" id="IPR046977">
    <property type="entry name" value="RsmC/RlmG"/>
</dbReference>
<dbReference type="InterPro" id="IPR029063">
    <property type="entry name" value="SAM-dependent_MTases_sf"/>
</dbReference>
<dbReference type="InterPro" id="IPR007848">
    <property type="entry name" value="Small_mtfrase_dom"/>
</dbReference>
<dbReference type="NCBIfam" id="NF011577">
    <property type="entry name" value="PRK15001.1"/>
    <property type="match status" value="1"/>
</dbReference>
<dbReference type="PANTHER" id="PTHR47816:SF5">
    <property type="entry name" value="RIBOSOMAL RNA LARGE SUBUNIT METHYLTRANSFERASE G"/>
    <property type="match status" value="1"/>
</dbReference>
<dbReference type="PANTHER" id="PTHR47816">
    <property type="entry name" value="RIBOSOMAL RNA SMALL SUBUNIT METHYLTRANSFERASE C"/>
    <property type="match status" value="1"/>
</dbReference>
<dbReference type="Pfam" id="PF05175">
    <property type="entry name" value="MTS"/>
    <property type="match status" value="1"/>
</dbReference>
<dbReference type="PIRSF" id="PIRSF037565">
    <property type="entry name" value="RRNA_m2G_Mtase_RsmD_prd"/>
    <property type="match status" value="1"/>
</dbReference>
<dbReference type="SUPFAM" id="SSF53335">
    <property type="entry name" value="S-adenosyl-L-methionine-dependent methyltransferases"/>
    <property type="match status" value="1"/>
</dbReference>
<sequence length="378" mass="42339">MSHLDNGFRSLTLQRFPATDDVNPLQAWEAADEYLLQQLDDTEIRGPVLILNDAFGALSCALAEHKPYSIGDSYISELATRENLRLNGIDESSVKFLDSTADYPQQPGVVLIKVPKTLALLEQQLRALRKVVTPDTRIIAGAKARDIHTSTLELFEKVLGPTTTTLAWKKARLINCTFNEPPLVDAPQTVSWKLEGTDWTIHNHANVFSRTGLDIGARFFMQHLPENLEGEIVDLGCGNGVIGLTLLDKNPQAKVVFVDESPMAVASSRLNVETNMPEALDRCEFMINNALSGVEPFRFNAVLCNPPFHQQHALTDNVAWEMFHHARRCLKINGELYIVANRHLDYFHKLKKIFGNCTTIATNNKFVVLKAVKLGRRR</sequence>